<name>JIP5_EMENI</name>
<dbReference type="EMBL" id="AACD01000089">
    <property type="protein sequence ID" value="EAA62358.1"/>
    <property type="molecule type" value="Genomic_DNA"/>
</dbReference>
<dbReference type="EMBL" id="BN001305">
    <property type="protein sequence ID" value="CBF81022.1"/>
    <property type="molecule type" value="Genomic_DNA"/>
</dbReference>
<dbReference type="RefSeq" id="XP_662781.1">
    <property type="nucleotide sequence ID" value="XM_657689.1"/>
</dbReference>
<dbReference type="SMR" id="Q5B2Q3"/>
<dbReference type="FunCoup" id="Q5B2Q3">
    <property type="interactions" value="103"/>
</dbReference>
<dbReference type="STRING" id="227321.Q5B2Q3"/>
<dbReference type="EnsemblFungi" id="CBF81022">
    <property type="protein sequence ID" value="CBF81022"/>
    <property type="gene ID" value="ANIA_05177"/>
</dbReference>
<dbReference type="KEGG" id="ani:ANIA_05177"/>
<dbReference type="VEuPathDB" id="FungiDB:AN5177"/>
<dbReference type="eggNOG" id="KOG2444">
    <property type="taxonomic scope" value="Eukaryota"/>
</dbReference>
<dbReference type="HOGENOM" id="CLU_052691_0_0_1"/>
<dbReference type="InParanoid" id="Q5B2Q3"/>
<dbReference type="OMA" id="QAIHPTE"/>
<dbReference type="OrthoDB" id="2288928at2759"/>
<dbReference type="Proteomes" id="UP000000560">
    <property type="component" value="Chromosome V"/>
</dbReference>
<dbReference type="GO" id="GO:0005730">
    <property type="term" value="C:nucleolus"/>
    <property type="evidence" value="ECO:0007669"/>
    <property type="project" value="UniProtKB-SubCell"/>
</dbReference>
<dbReference type="Gene3D" id="2.130.10.10">
    <property type="entry name" value="YVTN repeat-like/Quinoprotein amine dehydrogenase"/>
    <property type="match status" value="1"/>
</dbReference>
<dbReference type="InterPro" id="IPR015943">
    <property type="entry name" value="WD40/YVTN_repeat-like_dom_sf"/>
</dbReference>
<dbReference type="InterPro" id="IPR036322">
    <property type="entry name" value="WD40_repeat_dom_sf"/>
</dbReference>
<dbReference type="InterPro" id="IPR050505">
    <property type="entry name" value="WDR55_POC1"/>
</dbReference>
<dbReference type="PANTHER" id="PTHR44019">
    <property type="entry name" value="WD REPEAT-CONTAINING PROTEIN 55"/>
    <property type="match status" value="1"/>
</dbReference>
<dbReference type="PANTHER" id="PTHR44019:SF20">
    <property type="entry name" value="WD REPEAT-CONTAINING PROTEIN 55"/>
    <property type="match status" value="1"/>
</dbReference>
<dbReference type="SUPFAM" id="SSF50978">
    <property type="entry name" value="WD40 repeat-like"/>
    <property type="match status" value="1"/>
</dbReference>
<feature type="chain" id="PRO_0000333559" description="WD repeat-containing protein jip5">
    <location>
        <begin position="1"/>
        <end position="410"/>
    </location>
</feature>
<feature type="repeat" description="WD 1">
    <location>
        <begin position="9"/>
        <end position="48"/>
    </location>
</feature>
<feature type="repeat" description="WD 2">
    <location>
        <begin position="74"/>
        <end position="113"/>
    </location>
</feature>
<feature type="repeat" description="WD 3">
    <location>
        <begin position="119"/>
        <end position="160"/>
    </location>
</feature>
<feature type="repeat" description="WD 4">
    <location>
        <begin position="223"/>
        <end position="264"/>
    </location>
</feature>
<feature type="repeat" description="WD 5">
    <location>
        <begin position="273"/>
        <end position="316"/>
    </location>
</feature>
<feature type="repeat" description="WD 6">
    <location>
        <begin position="320"/>
        <end position="357"/>
    </location>
</feature>
<feature type="region of interest" description="Disordered" evidence="2">
    <location>
        <begin position="41"/>
        <end position="65"/>
    </location>
</feature>
<feature type="region of interest" description="Disordered" evidence="2">
    <location>
        <begin position="354"/>
        <end position="410"/>
    </location>
</feature>
<feature type="compositionally biased region" description="Acidic residues" evidence="2">
    <location>
        <begin position="43"/>
        <end position="53"/>
    </location>
</feature>
<feature type="compositionally biased region" description="Acidic residues" evidence="2">
    <location>
        <begin position="364"/>
        <end position="376"/>
    </location>
</feature>
<feature type="compositionally biased region" description="Basic and acidic residues" evidence="2">
    <location>
        <begin position="377"/>
        <end position="386"/>
    </location>
</feature>
<organism>
    <name type="scientific">Emericella nidulans (strain FGSC A4 / ATCC 38163 / CBS 112.46 / NRRL 194 / M139)</name>
    <name type="common">Aspergillus nidulans</name>
    <dbReference type="NCBI Taxonomy" id="227321"/>
    <lineage>
        <taxon>Eukaryota</taxon>
        <taxon>Fungi</taxon>
        <taxon>Dikarya</taxon>
        <taxon>Ascomycota</taxon>
        <taxon>Pezizomycotina</taxon>
        <taxon>Eurotiomycetes</taxon>
        <taxon>Eurotiomycetidae</taxon>
        <taxon>Eurotiales</taxon>
        <taxon>Aspergillaceae</taxon>
        <taxon>Aspergillus</taxon>
        <taxon>Aspergillus subgen. Nidulantes</taxon>
    </lineage>
</organism>
<keyword id="KW-0539">Nucleus</keyword>
<keyword id="KW-1185">Reference proteome</keyword>
<keyword id="KW-0677">Repeat</keyword>
<keyword id="KW-0853">WD repeat</keyword>
<reference key="1">
    <citation type="journal article" date="2005" name="Nature">
        <title>Sequencing of Aspergillus nidulans and comparative analysis with A. fumigatus and A. oryzae.</title>
        <authorList>
            <person name="Galagan J.E."/>
            <person name="Calvo S.E."/>
            <person name="Cuomo C."/>
            <person name="Ma L.-J."/>
            <person name="Wortman J.R."/>
            <person name="Batzoglou S."/>
            <person name="Lee S.-I."/>
            <person name="Bastuerkmen M."/>
            <person name="Spevak C.C."/>
            <person name="Clutterbuck J."/>
            <person name="Kapitonov V."/>
            <person name="Jurka J."/>
            <person name="Scazzocchio C."/>
            <person name="Farman M.L."/>
            <person name="Butler J."/>
            <person name="Purcell S."/>
            <person name="Harris S."/>
            <person name="Braus G.H."/>
            <person name="Draht O."/>
            <person name="Busch S."/>
            <person name="D'Enfert C."/>
            <person name="Bouchier C."/>
            <person name="Goldman G.H."/>
            <person name="Bell-Pedersen D."/>
            <person name="Griffiths-Jones S."/>
            <person name="Doonan J.H."/>
            <person name="Yu J."/>
            <person name="Vienken K."/>
            <person name="Pain A."/>
            <person name="Freitag M."/>
            <person name="Selker E.U."/>
            <person name="Archer D.B."/>
            <person name="Penalva M.A."/>
            <person name="Oakley B.R."/>
            <person name="Momany M."/>
            <person name="Tanaka T."/>
            <person name="Kumagai T."/>
            <person name="Asai K."/>
            <person name="Machida M."/>
            <person name="Nierman W.C."/>
            <person name="Denning D.W."/>
            <person name="Caddick M.X."/>
            <person name="Hynes M."/>
            <person name="Paoletti M."/>
            <person name="Fischer R."/>
            <person name="Miller B.L."/>
            <person name="Dyer P.S."/>
            <person name="Sachs M.S."/>
            <person name="Osmani S.A."/>
            <person name="Birren B.W."/>
        </authorList>
    </citation>
    <scope>NUCLEOTIDE SEQUENCE [LARGE SCALE GENOMIC DNA]</scope>
    <source>
        <strain>FGSC A4 / ATCC 38163 / CBS 112.46 / NRRL 194 / M139</strain>
    </source>
</reference>
<reference key="2">
    <citation type="journal article" date="2009" name="Fungal Genet. Biol.">
        <title>The 2008 update of the Aspergillus nidulans genome annotation: a community effort.</title>
        <authorList>
            <person name="Wortman J.R."/>
            <person name="Gilsenan J.M."/>
            <person name="Joardar V."/>
            <person name="Deegan J."/>
            <person name="Clutterbuck J."/>
            <person name="Andersen M.R."/>
            <person name="Archer D."/>
            <person name="Bencina M."/>
            <person name="Braus G."/>
            <person name="Coutinho P."/>
            <person name="von Dohren H."/>
            <person name="Doonan J."/>
            <person name="Driessen A.J."/>
            <person name="Durek P."/>
            <person name="Espeso E."/>
            <person name="Fekete E."/>
            <person name="Flipphi M."/>
            <person name="Estrada C.G."/>
            <person name="Geysens S."/>
            <person name="Goldman G."/>
            <person name="de Groot P.W."/>
            <person name="Hansen K."/>
            <person name="Harris S.D."/>
            <person name="Heinekamp T."/>
            <person name="Helmstaedt K."/>
            <person name="Henrissat B."/>
            <person name="Hofmann G."/>
            <person name="Homan T."/>
            <person name="Horio T."/>
            <person name="Horiuchi H."/>
            <person name="James S."/>
            <person name="Jones M."/>
            <person name="Karaffa L."/>
            <person name="Karanyi Z."/>
            <person name="Kato M."/>
            <person name="Keller N."/>
            <person name="Kelly D.E."/>
            <person name="Kiel J.A."/>
            <person name="Kim J.M."/>
            <person name="van der Klei I.J."/>
            <person name="Klis F.M."/>
            <person name="Kovalchuk A."/>
            <person name="Krasevec N."/>
            <person name="Kubicek C.P."/>
            <person name="Liu B."/>
            <person name="Maccabe A."/>
            <person name="Meyer V."/>
            <person name="Mirabito P."/>
            <person name="Miskei M."/>
            <person name="Mos M."/>
            <person name="Mullins J."/>
            <person name="Nelson D.R."/>
            <person name="Nielsen J."/>
            <person name="Oakley B.R."/>
            <person name="Osmani S.A."/>
            <person name="Pakula T."/>
            <person name="Paszewski A."/>
            <person name="Paulsen I."/>
            <person name="Pilsyk S."/>
            <person name="Pocsi I."/>
            <person name="Punt P.J."/>
            <person name="Ram A.F."/>
            <person name="Ren Q."/>
            <person name="Robellet X."/>
            <person name="Robson G."/>
            <person name="Seiboth B."/>
            <person name="van Solingen P."/>
            <person name="Specht T."/>
            <person name="Sun J."/>
            <person name="Taheri-Talesh N."/>
            <person name="Takeshita N."/>
            <person name="Ussery D."/>
            <person name="vanKuyk P.A."/>
            <person name="Visser H."/>
            <person name="van de Vondervoort P.J."/>
            <person name="de Vries R.P."/>
            <person name="Walton J."/>
            <person name="Xiang X."/>
            <person name="Xiong Y."/>
            <person name="Zeng A.P."/>
            <person name="Brandt B.W."/>
            <person name="Cornell M.J."/>
            <person name="van den Hondel C.A."/>
            <person name="Visser J."/>
            <person name="Oliver S.G."/>
            <person name="Turner G."/>
        </authorList>
    </citation>
    <scope>GENOME REANNOTATION</scope>
    <source>
        <strain>FGSC A4 / ATCC 38163 / CBS 112.46 / NRRL 194 / M139</strain>
    </source>
</reference>
<sequence>MFDTVCTLPLSADLFAQAIHPSEPIISVGLSTGHVQTFRLPTEEEEEHSDDEQASVSSSRNGKGHIDTMWRTRRHKGSCRTLTFGIDGEMLYSAGTDGLVKAAKAETGVVENKILIPTAKDGSVDAPTVVHALSPQTLLLATDSSKLHLYDLRVPYSKVAAPPQQTHRPHDDYVSSLTPLPASDTSTSGFSKQWVTTGGTTLAVTDLRRGVLMRSEDQEEELVSSTYIGGLSASGTSRGEKVVVGGSSGVLTLWERGAWDDQDERIYVERGAGGGESLETLTVVPEELGKGKMIAAGLGSGKVKFVRMGLNKVVSELTHDETEGVIGLGFDVEGHMVSGGGQIVKVWHEAADSIGGEKRGFGGDSDDSDDDSDDSDHEPKQGDDSRRKRKKQKGKDRGKGPEIMAFADLD</sequence>
<proteinExistence type="inferred from homology"/>
<gene>
    <name type="primary">jip5</name>
    <name type="ORF">AN5177</name>
</gene>
<protein>
    <recommendedName>
        <fullName>WD repeat-containing protein jip5</fullName>
    </recommendedName>
</protein>
<comment type="subcellular location">
    <subcellularLocation>
        <location evidence="1">Nucleus</location>
        <location evidence="1">Nucleolus</location>
    </subcellularLocation>
</comment>
<comment type="similarity">
    <text evidence="3">Belongs to the WD repeat WDR55 family.</text>
</comment>
<evidence type="ECO:0000250" key="1"/>
<evidence type="ECO:0000256" key="2">
    <source>
        <dbReference type="SAM" id="MobiDB-lite"/>
    </source>
</evidence>
<evidence type="ECO:0000305" key="3"/>
<accession>Q5B2Q3</accession>
<accession>C8VF50</accession>